<comment type="catalytic activity">
    <reaction>
        <text>L-glutamate + NH4(+) + ATP = L-glutamine + ADP + phosphate + H(+)</text>
        <dbReference type="Rhea" id="RHEA:16169"/>
        <dbReference type="ChEBI" id="CHEBI:15378"/>
        <dbReference type="ChEBI" id="CHEBI:28938"/>
        <dbReference type="ChEBI" id="CHEBI:29985"/>
        <dbReference type="ChEBI" id="CHEBI:30616"/>
        <dbReference type="ChEBI" id="CHEBI:43474"/>
        <dbReference type="ChEBI" id="CHEBI:58359"/>
        <dbReference type="ChEBI" id="CHEBI:456216"/>
        <dbReference type="EC" id="6.3.1.2"/>
    </reaction>
</comment>
<comment type="subunit">
    <text evidence="1">Homooctamer.</text>
</comment>
<comment type="interaction">
    <interactant intactId="EBI-10192111">
        <id>O82560</id>
    </interactant>
    <interactant intactId="EBI-10192111">
        <id>O82560</id>
        <label>-</label>
    </interactant>
    <organismsDiffer>false</organismsDiffer>
    <experiments>4</experiments>
</comment>
<comment type="subcellular location">
    <subcellularLocation>
        <location>Cytoplasm</location>
    </subcellularLocation>
</comment>
<comment type="tissue specificity">
    <text>This is a nodule isozyme.</text>
</comment>
<comment type="similarity">
    <text evidence="4">Belongs to the glutamine synthetase family.</text>
</comment>
<proteinExistence type="evidence at protein level"/>
<evidence type="ECO:0000250" key="1"/>
<evidence type="ECO:0000255" key="2">
    <source>
        <dbReference type="PROSITE-ProRule" id="PRU01330"/>
    </source>
</evidence>
<evidence type="ECO:0000255" key="3">
    <source>
        <dbReference type="PROSITE-ProRule" id="PRU01331"/>
    </source>
</evidence>
<evidence type="ECO:0000305" key="4"/>
<feature type="chain" id="PRO_0000153197" description="Glutamine synthetase cytosolic isozyme 2">
    <location>
        <begin position="1"/>
        <end position="356"/>
    </location>
</feature>
<feature type="domain" description="GS beta-grasp" evidence="2">
    <location>
        <begin position="19"/>
        <end position="99"/>
    </location>
</feature>
<feature type="domain" description="GS catalytic" evidence="3">
    <location>
        <begin position="106"/>
        <end position="356"/>
    </location>
</feature>
<keyword id="KW-0067">ATP-binding</keyword>
<keyword id="KW-0963">Cytoplasm</keyword>
<keyword id="KW-0436">Ligase</keyword>
<keyword id="KW-0535">Nitrogen fixation</keyword>
<keyword id="KW-0547">Nucleotide-binding</keyword>
<keyword id="KW-1185">Reference proteome</keyword>
<reference key="1">
    <citation type="online journal article" date="1998" name="Plant Gene Register">
        <title>Soybean gene coding for a nodule specific glutamine synthetase.</title>
        <authorList>
            <person name="Morey K.J."/>
            <person name="Sengupta-Gopalan C."/>
        </authorList>
        <locator>PGR98-194</locator>
    </citation>
    <scope>NUCLEOTIDE SEQUENCE [GENOMIC DNA]</scope>
    <source>
        <strain>cv. Resnik</strain>
        <tissue>Root nodule</tissue>
    </source>
</reference>
<organism>
    <name type="scientific">Glycine max</name>
    <name type="common">Soybean</name>
    <name type="synonym">Glycine hispida</name>
    <dbReference type="NCBI Taxonomy" id="3847"/>
    <lineage>
        <taxon>Eukaryota</taxon>
        <taxon>Viridiplantae</taxon>
        <taxon>Streptophyta</taxon>
        <taxon>Embryophyta</taxon>
        <taxon>Tracheophyta</taxon>
        <taxon>Spermatophyta</taxon>
        <taxon>Magnoliopsida</taxon>
        <taxon>eudicotyledons</taxon>
        <taxon>Gunneridae</taxon>
        <taxon>Pentapetalae</taxon>
        <taxon>rosids</taxon>
        <taxon>fabids</taxon>
        <taxon>Fabales</taxon>
        <taxon>Fabaceae</taxon>
        <taxon>Papilionoideae</taxon>
        <taxon>50 kb inversion clade</taxon>
        <taxon>NPAAA clade</taxon>
        <taxon>indigoferoid/millettioid clade</taxon>
        <taxon>Phaseoleae</taxon>
        <taxon>Glycine</taxon>
        <taxon>Glycine subgen. Soja</taxon>
    </lineage>
</organism>
<accession>O82560</accession>
<dbReference type="EC" id="6.3.1.2"/>
<dbReference type="EMBL" id="AF091456">
    <property type="protein sequence ID" value="AAC97935.1"/>
    <property type="molecule type" value="Genomic_DNA"/>
</dbReference>
<dbReference type="RefSeq" id="NP_001340569.1">
    <property type="nucleotide sequence ID" value="NM_001353640.1"/>
</dbReference>
<dbReference type="RefSeq" id="XP_003544980.1">
    <property type="nucleotide sequence ID" value="XM_003544932.3"/>
</dbReference>
<dbReference type="SMR" id="O82560"/>
<dbReference type="MINT" id="O82560"/>
<dbReference type="STRING" id="3847.O82560"/>
<dbReference type="PaxDb" id="3847-GLYMA14G39420.1"/>
<dbReference type="ProMEX" id="O82560"/>
<dbReference type="EnsemblPlants" id="KRH17323">
    <property type="protein sequence ID" value="KRH17323"/>
    <property type="gene ID" value="GLYMA_14G213300"/>
</dbReference>
<dbReference type="GeneID" id="547798"/>
<dbReference type="Gramene" id="KRH17323">
    <property type="protein sequence ID" value="KRH17323"/>
    <property type="gene ID" value="GLYMA_14G213300"/>
</dbReference>
<dbReference type="eggNOG" id="KOG0683">
    <property type="taxonomic scope" value="Eukaryota"/>
</dbReference>
<dbReference type="HOGENOM" id="CLU_036762_0_1_1"/>
<dbReference type="InParanoid" id="O82560"/>
<dbReference type="OrthoDB" id="1936100at2759"/>
<dbReference type="BRENDA" id="6.3.1.2">
    <property type="organism ID" value="2483"/>
</dbReference>
<dbReference type="Proteomes" id="UP000008827">
    <property type="component" value="Chromosome 14"/>
</dbReference>
<dbReference type="GO" id="GO:0005737">
    <property type="term" value="C:cytoplasm"/>
    <property type="evidence" value="ECO:0000318"/>
    <property type="project" value="GO_Central"/>
</dbReference>
<dbReference type="GO" id="GO:0005524">
    <property type="term" value="F:ATP binding"/>
    <property type="evidence" value="ECO:0007669"/>
    <property type="project" value="UniProtKB-KW"/>
</dbReference>
<dbReference type="GO" id="GO:0004356">
    <property type="term" value="F:glutamine synthetase activity"/>
    <property type="evidence" value="ECO:0000318"/>
    <property type="project" value="GO_Central"/>
</dbReference>
<dbReference type="GO" id="GO:0042802">
    <property type="term" value="F:identical protein binding"/>
    <property type="evidence" value="ECO:0000353"/>
    <property type="project" value="IntAct"/>
</dbReference>
<dbReference type="GO" id="GO:0006542">
    <property type="term" value="P:glutamine biosynthetic process"/>
    <property type="evidence" value="ECO:0000318"/>
    <property type="project" value="GO_Central"/>
</dbReference>
<dbReference type="FunFam" id="3.30.590.10:FF:000004">
    <property type="entry name" value="Glutamine synthetase"/>
    <property type="match status" value="1"/>
</dbReference>
<dbReference type="FunFam" id="3.10.20.70:FF:000003">
    <property type="entry name" value="Glutamine synthetase, chloroplastic"/>
    <property type="match status" value="1"/>
</dbReference>
<dbReference type="Gene3D" id="3.10.20.70">
    <property type="entry name" value="Glutamine synthetase, N-terminal domain"/>
    <property type="match status" value="1"/>
</dbReference>
<dbReference type="Gene3D" id="3.30.590.10">
    <property type="entry name" value="Glutamine synthetase/guanido kinase, catalytic domain"/>
    <property type="match status" value="2"/>
</dbReference>
<dbReference type="InterPro" id="IPR008147">
    <property type="entry name" value="Gln_synt_N"/>
</dbReference>
<dbReference type="InterPro" id="IPR036651">
    <property type="entry name" value="Gln_synt_N_sf"/>
</dbReference>
<dbReference type="InterPro" id="IPR014746">
    <property type="entry name" value="Gln_synth/guanido_kin_cat_dom"/>
</dbReference>
<dbReference type="InterPro" id="IPR008146">
    <property type="entry name" value="Gln_synth_cat_dom"/>
</dbReference>
<dbReference type="InterPro" id="IPR027303">
    <property type="entry name" value="Gln_synth_gly_rich_site"/>
</dbReference>
<dbReference type="InterPro" id="IPR027302">
    <property type="entry name" value="Gln_synth_N_conserv_site"/>
</dbReference>
<dbReference type="InterPro" id="IPR050292">
    <property type="entry name" value="Glutamine_Synthetase"/>
</dbReference>
<dbReference type="PANTHER" id="PTHR20852">
    <property type="entry name" value="GLUTAMINE SYNTHETASE"/>
    <property type="match status" value="1"/>
</dbReference>
<dbReference type="PANTHER" id="PTHR20852:SF93">
    <property type="entry name" value="GLUTAMINE SYNTHETASE CYTOSOLIC ISOZYME 1-1"/>
    <property type="match status" value="1"/>
</dbReference>
<dbReference type="Pfam" id="PF00120">
    <property type="entry name" value="Gln-synt_C"/>
    <property type="match status" value="1"/>
</dbReference>
<dbReference type="Pfam" id="PF03951">
    <property type="entry name" value="Gln-synt_N"/>
    <property type="match status" value="1"/>
</dbReference>
<dbReference type="SMART" id="SM01230">
    <property type="entry name" value="Gln-synt_C"/>
    <property type="match status" value="1"/>
</dbReference>
<dbReference type="SUPFAM" id="SSF54368">
    <property type="entry name" value="Glutamine synthetase, N-terminal domain"/>
    <property type="match status" value="1"/>
</dbReference>
<dbReference type="SUPFAM" id="SSF55931">
    <property type="entry name" value="Glutamine synthetase/guanido kinase"/>
    <property type="match status" value="1"/>
</dbReference>
<dbReference type="PROSITE" id="PS00180">
    <property type="entry name" value="GLNA_1"/>
    <property type="match status" value="1"/>
</dbReference>
<dbReference type="PROSITE" id="PS00181">
    <property type="entry name" value="GLNA_ATP"/>
    <property type="match status" value="1"/>
</dbReference>
<dbReference type="PROSITE" id="PS51986">
    <property type="entry name" value="GS_BETA_GRASP"/>
    <property type="match status" value="1"/>
</dbReference>
<dbReference type="PROSITE" id="PS51987">
    <property type="entry name" value="GS_CATALYTIC"/>
    <property type="match status" value="1"/>
</dbReference>
<protein>
    <recommendedName>
        <fullName>Glutamine synthetase cytosolic isozyme 2</fullName>
        <ecNumber>6.3.1.2</ecNumber>
    </recommendedName>
    <alternativeName>
        <fullName>GS1-2</fullName>
    </alternativeName>
    <alternativeName>
        <fullName>Glutamate--ammonia ligase</fullName>
    </alternativeName>
</protein>
<sequence>MSLLSDLINLNLSDITDKVIAEYIWVGGSGMDMRSKARTLSGPVKDPSKLPKWNYDGSSTGQAPGQDSEVILYPQAIFKDPFRRGSNILVMCDAYTPAGEPIPTNKRNNAAKIFGHPDVAAEEPWYGLEQEYTLLQKDVQWPLGWPLGGFPGPQGPYYCGTGANKAFGRDIVDSHYKACIYAGINISGINGEVMPGQWEFQVGPSIGISAADELWVARYILERITEIAGVVLSFDPKPIQGDWNGAGAHTNYSTKSMRNDGGYEVIKKAIAKLEKRHKEHIAAYGEGNERRLTGRHETADMNTFVWGVANRGASIRVGRDTEKAGKGYFEDRRPASNMDPYVVTSMIAETTILWKP</sequence>
<name>GLNA2_SOYBN</name>